<name>LFTR_PARXL</name>
<proteinExistence type="inferred from homology"/>
<evidence type="ECO:0000255" key="1">
    <source>
        <dbReference type="HAMAP-Rule" id="MF_00688"/>
    </source>
</evidence>
<reference key="1">
    <citation type="journal article" date="2006" name="Proc. Natl. Acad. Sci. U.S.A.">
        <title>Burkholderia xenovorans LB400 harbors a multi-replicon, 9.73-Mbp genome shaped for versatility.</title>
        <authorList>
            <person name="Chain P.S.G."/>
            <person name="Denef V.J."/>
            <person name="Konstantinidis K.T."/>
            <person name="Vergez L.M."/>
            <person name="Agullo L."/>
            <person name="Reyes V.L."/>
            <person name="Hauser L."/>
            <person name="Cordova M."/>
            <person name="Gomez L."/>
            <person name="Gonzalez M."/>
            <person name="Land M."/>
            <person name="Lao V."/>
            <person name="Larimer F."/>
            <person name="LiPuma J.J."/>
            <person name="Mahenthiralingam E."/>
            <person name="Malfatti S.A."/>
            <person name="Marx C.J."/>
            <person name="Parnell J.J."/>
            <person name="Ramette A."/>
            <person name="Richardson P."/>
            <person name="Seeger M."/>
            <person name="Smith D."/>
            <person name="Spilker T."/>
            <person name="Sul W.J."/>
            <person name="Tsoi T.V."/>
            <person name="Ulrich L.E."/>
            <person name="Zhulin I.B."/>
            <person name="Tiedje J.M."/>
        </authorList>
    </citation>
    <scope>NUCLEOTIDE SEQUENCE [LARGE SCALE GENOMIC DNA]</scope>
    <source>
        <strain>LB400</strain>
    </source>
</reference>
<protein>
    <recommendedName>
        <fullName evidence="1">Leucyl/phenylalanyl-tRNA--protein transferase</fullName>
        <ecNumber evidence="1">2.3.2.6</ecNumber>
    </recommendedName>
    <alternativeName>
        <fullName evidence="1">L/F-transferase</fullName>
    </alternativeName>
    <alternativeName>
        <fullName evidence="1">Leucyltransferase</fullName>
    </alternativeName>
    <alternativeName>
        <fullName evidence="1">Phenyalanyltransferase</fullName>
    </alternativeName>
</protein>
<sequence>MVPWLGPDDPFPPVERALGANSGAPGLLAASGDLLPSRLIDAYRRGIFPWYSDGQPVLWWSPDPRMILRPAEFKVSPSLRKTLRRVLRDDAWEIRVDHDFAAVMRACAQAPRRGQRGTWITADVVEAYSSLHRVGDAHSIETWFEGRRVGGLYGVSFGKMFFGESMFAEVTDASKMALAALVGHLRRHEIEMIDCQQNTSHLASLGGREIARKAFIAHVRASVEAPPIPWLFDKTVLLEIVAPAA</sequence>
<accession>Q13ZM1</accession>
<keyword id="KW-0012">Acyltransferase</keyword>
<keyword id="KW-0963">Cytoplasm</keyword>
<keyword id="KW-1185">Reference proteome</keyword>
<keyword id="KW-0808">Transferase</keyword>
<dbReference type="EC" id="2.3.2.6" evidence="1"/>
<dbReference type="EMBL" id="CP000270">
    <property type="protein sequence ID" value="ABE30468.1"/>
    <property type="molecule type" value="Genomic_DNA"/>
</dbReference>
<dbReference type="RefSeq" id="WP_011488123.1">
    <property type="nucleotide sequence ID" value="NC_007951.1"/>
</dbReference>
<dbReference type="SMR" id="Q13ZM1"/>
<dbReference type="STRING" id="266265.Bxe_A2505"/>
<dbReference type="KEGG" id="bxb:DR64_199"/>
<dbReference type="KEGG" id="bxe:Bxe_A2505"/>
<dbReference type="PATRIC" id="fig|266265.5.peg.2019"/>
<dbReference type="eggNOG" id="COG2360">
    <property type="taxonomic scope" value="Bacteria"/>
</dbReference>
<dbReference type="OrthoDB" id="9790282at2"/>
<dbReference type="Proteomes" id="UP000001817">
    <property type="component" value="Chromosome 1"/>
</dbReference>
<dbReference type="GO" id="GO:0005737">
    <property type="term" value="C:cytoplasm"/>
    <property type="evidence" value="ECO:0007669"/>
    <property type="project" value="UniProtKB-SubCell"/>
</dbReference>
<dbReference type="GO" id="GO:0008914">
    <property type="term" value="F:leucyl-tRNA--protein transferase activity"/>
    <property type="evidence" value="ECO:0007669"/>
    <property type="project" value="UniProtKB-UniRule"/>
</dbReference>
<dbReference type="GO" id="GO:0030163">
    <property type="term" value="P:protein catabolic process"/>
    <property type="evidence" value="ECO:0007669"/>
    <property type="project" value="UniProtKB-UniRule"/>
</dbReference>
<dbReference type="Gene3D" id="3.40.630.70">
    <property type="entry name" value="Leucyl/phenylalanyl-tRNA-protein transferase, C-terminal domain"/>
    <property type="match status" value="1"/>
</dbReference>
<dbReference type="Gene3D" id="3.30.70.3550">
    <property type="entry name" value="Leucyl/phenylalanyl-tRNA-protein transferase, N-terminal domain"/>
    <property type="match status" value="1"/>
</dbReference>
<dbReference type="HAMAP" id="MF_00688">
    <property type="entry name" value="Leu_Phe_trans"/>
    <property type="match status" value="1"/>
</dbReference>
<dbReference type="InterPro" id="IPR016181">
    <property type="entry name" value="Acyl_CoA_acyltransferase"/>
</dbReference>
<dbReference type="InterPro" id="IPR004616">
    <property type="entry name" value="Leu/Phe-tRNA_Trfase"/>
</dbReference>
<dbReference type="InterPro" id="IPR042203">
    <property type="entry name" value="Leu/Phe-tRNA_Trfase_C"/>
</dbReference>
<dbReference type="InterPro" id="IPR042221">
    <property type="entry name" value="Leu/Phe-tRNA_Trfase_N"/>
</dbReference>
<dbReference type="NCBIfam" id="TIGR00667">
    <property type="entry name" value="aat"/>
    <property type="match status" value="1"/>
</dbReference>
<dbReference type="PANTHER" id="PTHR30098">
    <property type="entry name" value="LEUCYL/PHENYLALANYL-TRNA--PROTEIN TRANSFERASE"/>
    <property type="match status" value="1"/>
</dbReference>
<dbReference type="PANTHER" id="PTHR30098:SF2">
    <property type="entry name" value="LEUCYL_PHENYLALANYL-TRNA--PROTEIN TRANSFERASE"/>
    <property type="match status" value="1"/>
</dbReference>
<dbReference type="Pfam" id="PF03588">
    <property type="entry name" value="Leu_Phe_trans"/>
    <property type="match status" value="1"/>
</dbReference>
<dbReference type="SUPFAM" id="SSF55729">
    <property type="entry name" value="Acyl-CoA N-acyltransferases (Nat)"/>
    <property type="match status" value="1"/>
</dbReference>
<feature type="chain" id="PRO_0000258052" description="Leucyl/phenylalanyl-tRNA--protein transferase">
    <location>
        <begin position="1"/>
        <end position="245"/>
    </location>
</feature>
<organism>
    <name type="scientific">Paraburkholderia xenovorans (strain LB400)</name>
    <dbReference type="NCBI Taxonomy" id="266265"/>
    <lineage>
        <taxon>Bacteria</taxon>
        <taxon>Pseudomonadati</taxon>
        <taxon>Pseudomonadota</taxon>
        <taxon>Betaproteobacteria</taxon>
        <taxon>Burkholderiales</taxon>
        <taxon>Burkholderiaceae</taxon>
        <taxon>Paraburkholderia</taxon>
    </lineage>
</organism>
<comment type="function">
    <text evidence="1">Functions in the N-end rule pathway of protein degradation where it conjugates Leu, Phe and, less efficiently, Met from aminoacyl-tRNAs to the N-termini of proteins containing an N-terminal arginine or lysine.</text>
</comment>
<comment type="catalytic activity">
    <reaction evidence="1">
        <text>N-terminal L-lysyl-[protein] + L-leucyl-tRNA(Leu) = N-terminal L-leucyl-L-lysyl-[protein] + tRNA(Leu) + H(+)</text>
        <dbReference type="Rhea" id="RHEA:12340"/>
        <dbReference type="Rhea" id="RHEA-COMP:9613"/>
        <dbReference type="Rhea" id="RHEA-COMP:9622"/>
        <dbReference type="Rhea" id="RHEA-COMP:12670"/>
        <dbReference type="Rhea" id="RHEA-COMP:12671"/>
        <dbReference type="ChEBI" id="CHEBI:15378"/>
        <dbReference type="ChEBI" id="CHEBI:65249"/>
        <dbReference type="ChEBI" id="CHEBI:78442"/>
        <dbReference type="ChEBI" id="CHEBI:78494"/>
        <dbReference type="ChEBI" id="CHEBI:133043"/>
        <dbReference type="EC" id="2.3.2.6"/>
    </reaction>
</comment>
<comment type="catalytic activity">
    <reaction evidence="1">
        <text>N-terminal L-arginyl-[protein] + L-leucyl-tRNA(Leu) = N-terminal L-leucyl-L-arginyl-[protein] + tRNA(Leu) + H(+)</text>
        <dbReference type="Rhea" id="RHEA:50416"/>
        <dbReference type="Rhea" id="RHEA-COMP:9613"/>
        <dbReference type="Rhea" id="RHEA-COMP:9622"/>
        <dbReference type="Rhea" id="RHEA-COMP:12672"/>
        <dbReference type="Rhea" id="RHEA-COMP:12673"/>
        <dbReference type="ChEBI" id="CHEBI:15378"/>
        <dbReference type="ChEBI" id="CHEBI:64719"/>
        <dbReference type="ChEBI" id="CHEBI:78442"/>
        <dbReference type="ChEBI" id="CHEBI:78494"/>
        <dbReference type="ChEBI" id="CHEBI:133044"/>
        <dbReference type="EC" id="2.3.2.6"/>
    </reaction>
</comment>
<comment type="catalytic activity">
    <reaction evidence="1">
        <text>L-phenylalanyl-tRNA(Phe) + an N-terminal L-alpha-aminoacyl-[protein] = an N-terminal L-phenylalanyl-L-alpha-aminoacyl-[protein] + tRNA(Phe)</text>
        <dbReference type="Rhea" id="RHEA:43632"/>
        <dbReference type="Rhea" id="RHEA-COMP:9668"/>
        <dbReference type="Rhea" id="RHEA-COMP:9699"/>
        <dbReference type="Rhea" id="RHEA-COMP:10636"/>
        <dbReference type="Rhea" id="RHEA-COMP:10637"/>
        <dbReference type="ChEBI" id="CHEBI:78442"/>
        <dbReference type="ChEBI" id="CHEBI:78531"/>
        <dbReference type="ChEBI" id="CHEBI:78597"/>
        <dbReference type="ChEBI" id="CHEBI:83561"/>
        <dbReference type="EC" id="2.3.2.6"/>
    </reaction>
</comment>
<comment type="subcellular location">
    <subcellularLocation>
        <location evidence="1">Cytoplasm</location>
    </subcellularLocation>
</comment>
<comment type="similarity">
    <text evidence="1">Belongs to the L/F-transferase family.</text>
</comment>
<gene>
    <name evidence="1" type="primary">aat</name>
    <name type="ordered locus">Bxeno_A1930</name>
    <name type="ORF">Bxe_A2505</name>
</gene>